<comment type="function">
    <text evidence="1">Catalyzes the attachment of threonine to tRNA(Thr) in a two-step reaction: L-threonine is first activated by ATP to form Thr-AMP and then transferred to the acceptor end of tRNA(Thr). Also edits incorrectly charged L-seryl-tRNA(Thr).</text>
</comment>
<comment type="catalytic activity">
    <reaction evidence="1">
        <text>tRNA(Thr) + L-threonine + ATP = L-threonyl-tRNA(Thr) + AMP + diphosphate + H(+)</text>
        <dbReference type="Rhea" id="RHEA:24624"/>
        <dbReference type="Rhea" id="RHEA-COMP:9670"/>
        <dbReference type="Rhea" id="RHEA-COMP:9704"/>
        <dbReference type="ChEBI" id="CHEBI:15378"/>
        <dbReference type="ChEBI" id="CHEBI:30616"/>
        <dbReference type="ChEBI" id="CHEBI:33019"/>
        <dbReference type="ChEBI" id="CHEBI:57926"/>
        <dbReference type="ChEBI" id="CHEBI:78442"/>
        <dbReference type="ChEBI" id="CHEBI:78534"/>
        <dbReference type="ChEBI" id="CHEBI:456215"/>
        <dbReference type="EC" id="6.1.1.3"/>
    </reaction>
</comment>
<comment type="cofactor">
    <cofactor evidence="1">
        <name>Zn(2+)</name>
        <dbReference type="ChEBI" id="CHEBI:29105"/>
    </cofactor>
    <text evidence="1">Binds 1 zinc ion per subunit.</text>
</comment>
<comment type="subunit">
    <text evidence="1">Homodimer.</text>
</comment>
<comment type="subcellular location">
    <subcellularLocation>
        <location evidence="1">Cytoplasm</location>
    </subcellularLocation>
</comment>
<comment type="similarity">
    <text evidence="1">Belongs to the class-II aminoacyl-tRNA synthetase family.</text>
</comment>
<accession>B7NT58</accession>
<keyword id="KW-0007">Acetylation</keyword>
<keyword id="KW-0030">Aminoacyl-tRNA synthetase</keyword>
<keyword id="KW-0067">ATP-binding</keyword>
<keyword id="KW-0963">Cytoplasm</keyword>
<keyword id="KW-0436">Ligase</keyword>
<keyword id="KW-0479">Metal-binding</keyword>
<keyword id="KW-0547">Nucleotide-binding</keyword>
<keyword id="KW-0648">Protein biosynthesis</keyword>
<keyword id="KW-0694">RNA-binding</keyword>
<keyword id="KW-0820">tRNA-binding</keyword>
<keyword id="KW-0862">Zinc</keyword>
<dbReference type="EC" id="6.1.1.3" evidence="1"/>
<dbReference type="EMBL" id="CU928164">
    <property type="protein sequence ID" value="CAR17469.1"/>
    <property type="molecule type" value="Genomic_DNA"/>
</dbReference>
<dbReference type="RefSeq" id="WP_001144202.1">
    <property type="nucleotide sequence ID" value="NC_011750.1"/>
</dbReference>
<dbReference type="RefSeq" id="YP_002407343.1">
    <property type="nucleotide sequence ID" value="NC_011750.1"/>
</dbReference>
<dbReference type="SMR" id="B7NT58"/>
<dbReference type="STRING" id="585057.ECIAI39_1335"/>
<dbReference type="GeneID" id="93775932"/>
<dbReference type="KEGG" id="ect:ECIAI39_1335"/>
<dbReference type="PATRIC" id="fig|585057.6.peg.1397"/>
<dbReference type="HOGENOM" id="CLU_008554_0_1_6"/>
<dbReference type="Proteomes" id="UP000000749">
    <property type="component" value="Chromosome"/>
</dbReference>
<dbReference type="GO" id="GO:0005829">
    <property type="term" value="C:cytosol"/>
    <property type="evidence" value="ECO:0007669"/>
    <property type="project" value="TreeGrafter"/>
</dbReference>
<dbReference type="GO" id="GO:0005524">
    <property type="term" value="F:ATP binding"/>
    <property type="evidence" value="ECO:0007669"/>
    <property type="project" value="UniProtKB-UniRule"/>
</dbReference>
<dbReference type="GO" id="GO:0046872">
    <property type="term" value="F:metal ion binding"/>
    <property type="evidence" value="ECO:0007669"/>
    <property type="project" value="UniProtKB-KW"/>
</dbReference>
<dbReference type="GO" id="GO:0004829">
    <property type="term" value="F:threonine-tRNA ligase activity"/>
    <property type="evidence" value="ECO:0007669"/>
    <property type="project" value="UniProtKB-UniRule"/>
</dbReference>
<dbReference type="GO" id="GO:0000049">
    <property type="term" value="F:tRNA binding"/>
    <property type="evidence" value="ECO:0007669"/>
    <property type="project" value="UniProtKB-KW"/>
</dbReference>
<dbReference type="GO" id="GO:0006435">
    <property type="term" value="P:threonyl-tRNA aminoacylation"/>
    <property type="evidence" value="ECO:0007669"/>
    <property type="project" value="UniProtKB-UniRule"/>
</dbReference>
<dbReference type="CDD" id="cd01667">
    <property type="entry name" value="TGS_ThrRS"/>
    <property type="match status" value="1"/>
</dbReference>
<dbReference type="CDD" id="cd00860">
    <property type="entry name" value="ThrRS_anticodon"/>
    <property type="match status" value="1"/>
</dbReference>
<dbReference type="CDD" id="cd00771">
    <property type="entry name" value="ThrRS_core"/>
    <property type="match status" value="1"/>
</dbReference>
<dbReference type="FunFam" id="3.10.20.30:FF:000005">
    <property type="entry name" value="Threonine--tRNA ligase"/>
    <property type="match status" value="1"/>
</dbReference>
<dbReference type="FunFam" id="3.30.54.20:FF:000002">
    <property type="entry name" value="Threonine--tRNA ligase"/>
    <property type="match status" value="1"/>
</dbReference>
<dbReference type="FunFam" id="3.30.930.10:FF:000002">
    <property type="entry name" value="Threonine--tRNA ligase"/>
    <property type="match status" value="1"/>
</dbReference>
<dbReference type="FunFam" id="3.40.50.800:FF:000001">
    <property type="entry name" value="Threonine--tRNA ligase"/>
    <property type="match status" value="1"/>
</dbReference>
<dbReference type="FunFam" id="3.30.980.10:FF:000005">
    <property type="entry name" value="Threonyl-tRNA synthetase, mitochondrial"/>
    <property type="match status" value="1"/>
</dbReference>
<dbReference type="Gene3D" id="3.10.20.30">
    <property type="match status" value="1"/>
</dbReference>
<dbReference type="Gene3D" id="3.30.54.20">
    <property type="match status" value="1"/>
</dbReference>
<dbReference type="Gene3D" id="3.40.50.800">
    <property type="entry name" value="Anticodon-binding domain"/>
    <property type="match status" value="1"/>
</dbReference>
<dbReference type="Gene3D" id="3.30.930.10">
    <property type="entry name" value="Bira Bifunctional Protein, Domain 2"/>
    <property type="match status" value="1"/>
</dbReference>
<dbReference type="Gene3D" id="3.30.980.10">
    <property type="entry name" value="Threonyl-trna Synthetase, Chain A, domain 2"/>
    <property type="match status" value="1"/>
</dbReference>
<dbReference type="HAMAP" id="MF_00184">
    <property type="entry name" value="Thr_tRNA_synth"/>
    <property type="match status" value="1"/>
</dbReference>
<dbReference type="InterPro" id="IPR002314">
    <property type="entry name" value="aa-tRNA-synt_IIb"/>
</dbReference>
<dbReference type="InterPro" id="IPR006195">
    <property type="entry name" value="aa-tRNA-synth_II"/>
</dbReference>
<dbReference type="InterPro" id="IPR045864">
    <property type="entry name" value="aa-tRNA-synth_II/BPL/LPL"/>
</dbReference>
<dbReference type="InterPro" id="IPR004154">
    <property type="entry name" value="Anticodon-bd"/>
</dbReference>
<dbReference type="InterPro" id="IPR036621">
    <property type="entry name" value="Anticodon-bd_dom_sf"/>
</dbReference>
<dbReference type="InterPro" id="IPR012675">
    <property type="entry name" value="Beta-grasp_dom_sf"/>
</dbReference>
<dbReference type="InterPro" id="IPR004095">
    <property type="entry name" value="TGS"/>
</dbReference>
<dbReference type="InterPro" id="IPR012676">
    <property type="entry name" value="TGS-like"/>
</dbReference>
<dbReference type="InterPro" id="IPR002320">
    <property type="entry name" value="Thr-tRNA-ligase_IIa"/>
</dbReference>
<dbReference type="InterPro" id="IPR018163">
    <property type="entry name" value="Thr/Ala-tRNA-synth_IIc_edit"/>
</dbReference>
<dbReference type="InterPro" id="IPR047246">
    <property type="entry name" value="ThrRS_anticodon"/>
</dbReference>
<dbReference type="InterPro" id="IPR033728">
    <property type="entry name" value="ThrRS_core"/>
</dbReference>
<dbReference type="InterPro" id="IPR012947">
    <property type="entry name" value="tRNA_SAD"/>
</dbReference>
<dbReference type="NCBIfam" id="TIGR00418">
    <property type="entry name" value="thrS"/>
    <property type="match status" value="1"/>
</dbReference>
<dbReference type="PANTHER" id="PTHR11451:SF44">
    <property type="entry name" value="THREONINE--TRNA LIGASE, CHLOROPLASTIC_MITOCHONDRIAL 2"/>
    <property type="match status" value="1"/>
</dbReference>
<dbReference type="PANTHER" id="PTHR11451">
    <property type="entry name" value="THREONINE-TRNA LIGASE"/>
    <property type="match status" value="1"/>
</dbReference>
<dbReference type="Pfam" id="PF03129">
    <property type="entry name" value="HGTP_anticodon"/>
    <property type="match status" value="1"/>
</dbReference>
<dbReference type="Pfam" id="PF02824">
    <property type="entry name" value="TGS"/>
    <property type="match status" value="1"/>
</dbReference>
<dbReference type="Pfam" id="PF00587">
    <property type="entry name" value="tRNA-synt_2b"/>
    <property type="match status" value="1"/>
</dbReference>
<dbReference type="Pfam" id="PF07973">
    <property type="entry name" value="tRNA_SAD"/>
    <property type="match status" value="1"/>
</dbReference>
<dbReference type="PRINTS" id="PR01047">
    <property type="entry name" value="TRNASYNTHTHR"/>
</dbReference>
<dbReference type="SMART" id="SM00863">
    <property type="entry name" value="tRNA_SAD"/>
    <property type="match status" value="1"/>
</dbReference>
<dbReference type="SUPFAM" id="SSF52954">
    <property type="entry name" value="Class II aaRS ABD-related"/>
    <property type="match status" value="1"/>
</dbReference>
<dbReference type="SUPFAM" id="SSF55681">
    <property type="entry name" value="Class II aaRS and biotin synthetases"/>
    <property type="match status" value="1"/>
</dbReference>
<dbReference type="SUPFAM" id="SSF81271">
    <property type="entry name" value="TGS-like"/>
    <property type="match status" value="1"/>
</dbReference>
<dbReference type="SUPFAM" id="SSF55186">
    <property type="entry name" value="ThrRS/AlaRS common domain"/>
    <property type="match status" value="1"/>
</dbReference>
<dbReference type="PROSITE" id="PS50862">
    <property type="entry name" value="AA_TRNA_LIGASE_II"/>
    <property type="match status" value="1"/>
</dbReference>
<dbReference type="PROSITE" id="PS51880">
    <property type="entry name" value="TGS"/>
    <property type="match status" value="1"/>
</dbReference>
<organism>
    <name type="scientific">Escherichia coli O7:K1 (strain IAI39 / ExPEC)</name>
    <dbReference type="NCBI Taxonomy" id="585057"/>
    <lineage>
        <taxon>Bacteria</taxon>
        <taxon>Pseudomonadati</taxon>
        <taxon>Pseudomonadota</taxon>
        <taxon>Gammaproteobacteria</taxon>
        <taxon>Enterobacterales</taxon>
        <taxon>Enterobacteriaceae</taxon>
        <taxon>Escherichia</taxon>
    </lineage>
</organism>
<gene>
    <name evidence="1" type="primary">thrS</name>
    <name type="ordered locus">ECIAI39_1335</name>
</gene>
<evidence type="ECO:0000255" key="1">
    <source>
        <dbReference type="HAMAP-Rule" id="MF_00184"/>
    </source>
</evidence>
<evidence type="ECO:0000255" key="2">
    <source>
        <dbReference type="PROSITE-ProRule" id="PRU01228"/>
    </source>
</evidence>
<feature type="chain" id="PRO_1000199549" description="Threonine--tRNA ligase">
    <location>
        <begin position="1"/>
        <end position="642"/>
    </location>
</feature>
<feature type="domain" description="TGS" evidence="2">
    <location>
        <begin position="1"/>
        <end position="61"/>
    </location>
</feature>
<feature type="region of interest" description="Catalytic" evidence="1">
    <location>
        <begin position="243"/>
        <end position="534"/>
    </location>
</feature>
<feature type="binding site" evidence="1">
    <location>
        <position position="334"/>
    </location>
    <ligand>
        <name>Zn(2+)</name>
        <dbReference type="ChEBI" id="CHEBI:29105"/>
    </ligand>
</feature>
<feature type="binding site" evidence="1">
    <location>
        <position position="385"/>
    </location>
    <ligand>
        <name>Zn(2+)</name>
        <dbReference type="ChEBI" id="CHEBI:29105"/>
    </ligand>
</feature>
<feature type="binding site" evidence="1">
    <location>
        <position position="511"/>
    </location>
    <ligand>
        <name>Zn(2+)</name>
        <dbReference type="ChEBI" id="CHEBI:29105"/>
    </ligand>
</feature>
<feature type="modified residue" description="N6-acetyllysine" evidence="1">
    <location>
        <position position="286"/>
    </location>
</feature>
<reference key="1">
    <citation type="journal article" date="2009" name="PLoS Genet.">
        <title>Organised genome dynamics in the Escherichia coli species results in highly diverse adaptive paths.</title>
        <authorList>
            <person name="Touchon M."/>
            <person name="Hoede C."/>
            <person name="Tenaillon O."/>
            <person name="Barbe V."/>
            <person name="Baeriswyl S."/>
            <person name="Bidet P."/>
            <person name="Bingen E."/>
            <person name="Bonacorsi S."/>
            <person name="Bouchier C."/>
            <person name="Bouvet O."/>
            <person name="Calteau A."/>
            <person name="Chiapello H."/>
            <person name="Clermont O."/>
            <person name="Cruveiller S."/>
            <person name="Danchin A."/>
            <person name="Diard M."/>
            <person name="Dossat C."/>
            <person name="Karoui M.E."/>
            <person name="Frapy E."/>
            <person name="Garry L."/>
            <person name="Ghigo J.M."/>
            <person name="Gilles A.M."/>
            <person name="Johnson J."/>
            <person name="Le Bouguenec C."/>
            <person name="Lescat M."/>
            <person name="Mangenot S."/>
            <person name="Martinez-Jehanne V."/>
            <person name="Matic I."/>
            <person name="Nassif X."/>
            <person name="Oztas S."/>
            <person name="Petit M.A."/>
            <person name="Pichon C."/>
            <person name="Rouy Z."/>
            <person name="Ruf C.S."/>
            <person name="Schneider D."/>
            <person name="Tourret J."/>
            <person name="Vacherie B."/>
            <person name="Vallenet D."/>
            <person name="Medigue C."/>
            <person name="Rocha E.P.C."/>
            <person name="Denamur E."/>
        </authorList>
    </citation>
    <scope>NUCLEOTIDE SEQUENCE [LARGE SCALE GENOMIC DNA]</scope>
    <source>
        <strain>IAI39 / ExPEC</strain>
    </source>
</reference>
<name>SYT_ECO7I</name>
<sequence>MPVITLPDGSQRHYDHAVSPMDVALDIGPGLAKACIAGRVNGELVDACDLIENDAQLSIITAKDEEGLEIIRHSCAHLLGHAIKQLWPHTKMAIGPVIDNGFYYDVDLDRTLTQEDVEALEKRMHELAEKNYDVIKKKVSWHEARETFANRGESYKVSILDENIAHDDKPGLYFHEEYVDMCRGPHVPNMRFCHHFKLMKTAGAYWRGDSNNKMLQRIYGTAWADKKALNAYLQRLEEAAKRDHRKIGKQLDLYHMQEEAPGMVFWHNDGWTIFRELEVFVRSKLKEYQYQEVKGPFMMDRVLWEKTGHWDNYKDAMFTTSSENREYCIKPMNCPGHVQIFNQGLKSYRDLPLRMAEFGSCHRNEPSGSLHGLMRVRGFTQDDAHIFCTEEQIRDEVNGCIRLVYDMYSTFGFEKIVVKLSTRPEKRIGSDEMWDRAEADLAVALEENNIPFEYQLGEGAFYGPKIEFTLYDCLDRAWQCGTVQLDFSLPSRLSASYVGEDNERKVPVMIHRAILGSMERFIGILTEEFAGFFPTWLAPVQVVIMNITDSQSEYVNELTQKLSNAGIRVKADLRNEKIGFKIREHTLRRVPYMLVCGDKEVESGKVAVRTRRGKDLGSMDVNEVIEKLQQEIRSRSLKQLEE</sequence>
<protein>
    <recommendedName>
        <fullName evidence="1">Threonine--tRNA ligase</fullName>
        <ecNumber evidence="1">6.1.1.3</ecNumber>
    </recommendedName>
    <alternativeName>
        <fullName evidence="1">Threonyl-tRNA synthetase</fullName>
        <shortName evidence="1">ThrRS</shortName>
    </alternativeName>
</protein>
<proteinExistence type="inferred from homology"/>